<proteinExistence type="evidence at protein level"/>
<dbReference type="EMBL" id="BA000022">
    <property type="protein sequence ID" value="BAA16708.1"/>
    <property type="molecule type" value="Genomic_DNA"/>
</dbReference>
<dbReference type="PIR" id="S74556">
    <property type="entry name" value="S74556"/>
</dbReference>
<dbReference type="PDB" id="6WJ6">
    <property type="method" value="EM"/>
    <property type="resolution" value="2.58 A"/>
    <property type="chains" value="M=1-35"/>
</dbReference>
<dbReference type="PDB" id="7N8O">
    <property type="method" value="EM"/>
    <property type="resolution" value="1.93 A"/>
    <property type="chains" value="M/m=1-31"/>
</dbReference>
<dbReference type="PDB" id="7RCV">
    <property type="method" value="EM"/>
    <property type="resolution" value="2.01 A"/>
    <property type="chains" value="M/m=1-31"/>
</dbReference>
<dbReference type="PDB" id="8TOW">
    <property type="method" value="EM"/>
    <property type="resolution" value="2.14 A"/>
    <property type="chains" value="M/m=1-35"/>
</dbReference>
<dbReference type="PDB" id="9EH5">
    <property type="method" value="EM"/>
    <property type="resolution" value="1.97 A"/>
    <property type="chains" value="M/m=1-35"/>
</dbReference>
<dbReference type="PDBsum" id="6WJ6"/>
<dbReference type="PDBsum" id="7N8O"/>
<dbReference type="PDBsum" id="7RCV"/>
<dbReference type="PDBsum" id="8TOW"/>
<dbReference type="PDBsum" id="9EH5"/>
<dbReference type="EMDB" id="EMD-21690"/>
<dbReference type="EMDB" id="EMD-24239"/>
<dbReference type="EMDB" id="EMD-24407"/>
<dbReference type="EMDB" id="EMD-41460"/>
<dbReference type="EMDB" id="EMD-48046"/>
<dbReference type="SMR" id="P72701"/>
<dbReference type="IntAct" id="P72701">
    <property type="interactions" value="5"/>
</dbReference>
<dbReference type="STRING" id="1148.gene:10497563"/>
<dbReference type="PaxDb" id="1148-1651781"/>
<dbReference type="EnsemblBacteria" id="BAA16708">
    <property type="protein sequence ID" value="BAA16708"/>
    <property type="gene ID" value="BAA16708"/>
</dbReference>
<dbReference type="KEGG" id="syn:sml0003"/>
<dbReference type="InParanoid" id="P72701"/>
<dbReference type="BioCyc" id="MetaCyc:PSBM-MONOMER"/>
<dbReference type="Proteomes" id="UP000001425">
    <property type="component" value="Chromosome"/>
</dbReference>
<dbReference type="GO" id="GO:0031676">
    <property type="term" value="C:plasma membrane-derived thylakoid membrane"/>
    <property type="evidence" value="ECO:0007669"/>
    <property type="project" value="UniProtKB-SubCell"/>
</dbReference>
<dbReference type="GO" id="GO:0030096">
    <property type="term" value="C:plasma membrane-derived thylakoid photosystem II"/>
    <property type="evidence" value="ECO:0000314"/>
    <property type="project" value="UniProtKB"/>
</dbReference>
<dbReference type="GO" id="GO:0019684">
    <property type="term" value="P:photosynthesis, light reaction"/>
    <property type="evidence" value="ECO:0007669"/>
    <property type="project" value="InterPro"/>
</dbReference>
<dbReference type="HAMAP" id="MF_00438">
    <property type="entry name" value="PSII_PsbM"/>
    <property type="match status" value="1"/>
</dbReference>
<dbReference type="InterPro" id="IPR007826">
    <property type="entry name" value="PSII_PsbM"/>
</dbReference>
<dbReference type="InterPro" id="IPR037269">
    <property type="entry name" value="PSII_PsbM_sf"/>
</dbReference>
<dbReference type="NCBIfam" id="TIGR03038">
    <property type="entry name" value="PS_II_psbM"/>
    <property type="match status" value="1"/>
</dbReference>
<dbReference type="PANTHER" id="PTHR35774">
    <property type="entry name" value="PHOTOSYSTEM II REACTION CENTER PROTEIN M"/>
    <property type="match status" value="1"/>
</dbReference>
<dbReference type="PANTHER" id="PTHR35774:SF1">
    <property type="entry name" value="PHOTOSYSTEM II REACTION CENTER PROTEIN M"/>
    <property type="match status" value="1"/>
</dbReference>
<dbReference type="Pfam" id="PF05151">
    <property type="entry name" value="PsbM"/>
    <property type="match status" value="1"/>
</dbReference>
<dbReference type="SUPFAM" id="SSF161033">
    <property type="entry name" value="Photosystem II reaction center protein M, PsbM"/>
    <property type="match status" value="1"/>
</dbReference>
<gene>
    <name evidence="1" type="primary">psbM</name>
    <name type="ordered locus">sml0003</name>
</gene>
<organism>
    <name type="scientific">Synechocystis sp. (strain ATCC 27184 / PCC 6803 / Kazusa)</name>
    <dbReference type="NCBI Taxonomy" id="1111708"/>
    <lineage>
        <taxon>Bacteria</taxon>
        <taxon>Bacillati</taxon>
        <taxon>Cyanobacteriota</taxon>
        <taxon>Cyanophyceae</taxon>
        <taxon>Synechococcales</taxon>
        <taxon>Merismopediaceae</taxon>
        <taxon>Synechocystis</taxon>
    </lineage>
</organism>
<accession>P72701</accession>
<feature type="chain" id="PRO_0000217589" description="Photosystem II reaction center protein M">
    <location>
        <begin position="1"/>
        <end position="35"/>
    </location>
</feature>
<feature type="transmembrane region" description="Helical" evidence="4 5">
    <location>
        <begin position="7"/>
        <end position="28"/>
    </location>
</feature>
<feature type="modified residue" description="N-formylmethionine" evidence="4 5">
    <location>
        <position position="1"/>
    </location>
</feature>
<feature type="helix" evidence="8">
    <location>
        <begin position="7"/>
        <end position="28"/>
    </location>
</feature>
<comment type="function">
    <text evidence="1 3 4">One of the components of the core complex of photosystem II (PSII). PSII is a light-driven water:plastoquinone oxidoreductase that uses light energy to abstract electrons from H(2)O, generating O(2) and a proton gradient subsequently used for ATP formation. It consists of a core antenna complex that captures photons, and an electron transfer chain that converts photonic excitation into a charge separation. This subunit is found at the monomer-monomer interface (PubMed:34937700). Involved in assembly of monomeric PSII from the CP43-less intermediate.</text>
</comment>
<comment type="subunit">
    <text evidence="1 4">PSII is composed of 1 copy each of membrane proteins PsbA, PsbB, PsbC, PsbD, PsbE, PsbF, PsbH, PsbI, PsbJ, PsbK, PsbL, PsbM, PsbT, PsbX, PsbY, PsbZ, Psb30/Ycf12, peripheral proteins PsbO, CyanoQ (PsbQ), PsbU, PsbV and a large number of cofactors. It forms dimeric complexes.</text>
</comment>
<comment type="subcellular location">
    <subcellularLocation>
        <location evidence="1 2 4">Cellular thylakoid membrane</location>
        <topology evidence="1 4">Single-pass membrane protein</topology>
    </subcellularLocation>
</comment>
<comment type="disruption phenotype">
    <text evidence="3">Decreased photoautotrophic growth. Decreased assembly of PSII monomers and dimers, increased levels of the CP43-less intermediate. A double psbM-psbT mutants only assembles PSII monomers, not PSII dimers. A double psbM-psb27 mutant is incapable of photoautotrophic growth, but does assemble the CP43-less assembly intermediate. Cells are light sensitive and rapidly photoinactivated; recovery requires protein synthesis and can occur in the dark.</text>
</comment>
<comment type="similarity">
    <text evidence="1">Belongs to the PsbM family.</text>
</comment>
<name>PSBM_SYNY3</name>
<evidence type="ECO:0000255" key="1">
    <source>
        <dbReference type="HAMAP-Rule" id="MF_00438"/>
    </source>
</evidence>
<evidence type="ECO:0000269" key="2">
    <source>
    </source>
</evidence>
<evidence type="ECO:0000269" key="3">
    <source>
    </source>
</evidence>
<evidence type="ECO:0000269" key="4">
    <source>
    </source>
</evidence>
<evidence type="ECO:0000312" key="5">
    <source>
        <dbReference type="PDB" id="7N8O"/>
    </source>
</evidence>
<evidence type="ECO:0007744" key="6">
    <source>
        <dbReference type="PDB" id="7N8O"/>
    </source>
</evidence>
<evidence type="ECO:0007744" key="7">
    <source>
        <dbReference type="PDB" id="7RCV"/>
    </source>
</evidence>
<evidence type="ECO:0007829" key="8">
    <source>
        <dbReference type="PDB" id="7N8O"/>
    </source>
</evidence>
<keyword id="KW-0002">3D-structure</keyword>
<keyword id="KW-0903">Direct protein sequencing</keyword>
<keyword id="KW-0291">Formylation</keyword>
<keyword id="KW-0472">Membrane</keyword>
<keyword id="KW-0602">Photosynthesis</keyword>
<keyword id="KW-0604">Photosystem II</keyword>
<keyword id="KW-0674">Reaction center</keyword>
<keyword id="KW-1185">Reference proteome</keyword>
<keyword id="KW-0793">Thylakoid</keyword>
<keyword id="KW-0812">Transmembrane</keyword>
<keyword id="KW-1133">Transmembrane helix</keyword>
<sequence>MQVNNLGFIASILFVLVPTVFLLILFIQTGKQSES</sequence>
<protein>
    <recommendedName>
        <fullName evidence="1">Photosystem II reaction center protein M</fullName>
        <shortName evidence="1">PSII-M</shortName>
    </recommendedName>
</protein>
<reference key="1">
    <citation type="journal article" date="1996" name="DNA Res.">
        <title>Sequence analysis of the genome of the unicellular cyanobacterium Synechocystis sp. strain PCC6803. II. Sequence determination of the entire genome and assignment of potential protein-coding regions.</title>
        <authorList>
            <person name="Kaneko T."/>
            <person name="Sato S."/>
            <person name="Kotani H."/>
            <person name="Tanaka A."/>
            <person name="Asamizu E."/>
            <person name="Nakamura Y."/>
            <person name="Miyajima N."/>
            <person name="Hirosawa M."/>
            <person name="Sugiura M."/>
            <person name="Sasamoto S."/>
            <person name="Kimura T."/>
            <person name="Hosouchi T."/>
            <person name="Matsuno A."/>
            <person name="Muraki A."/>
            <person name="Nakazaki N."/>
            <person name="Naruo K."/>
            <person name="Okumura S."/>
            <person name="Shimpo S."/>
            <person name="Takeuchi C."/>
            <person name="Wada T."/>
            <person name="Watanabe A."/>
            <person name="Yamada M."/>
            <person name="Yasuda M."/>
            <person name="Tabata S."/>
        </authorList>
    </citation>
    <scope>NUCLEOTIDE SEQUENCE [LARGE SCALE GENOMIC DNA]</scope>
    <source>
        <strain>ATCC 27184 / PCC 6803 / Kazusa</strain>
    </source>
</reference>
<reference key="2">
    <citation type="journal article" date="2002" name="Biochemistry">
        <title>Proteomic analysis of a highly active photosystem II preparation from the cyanobacterium Synechocystis sp. PCC 6803 reveals the presence of novel polypeptides.</title>
        <authorList>
            <person name="Kashino Y."/>
            <person name="Lauber W.M."/>
            <person name="Carroll J.A."/>
            <person name="Wang Q."/>
            <person name="Whitmarsh J."/>
            <person name="Satoh K."/>
            <person name="Pakrasi H.B."/>
        </authorList>
    </citation>
    <scope>PROTEIN SEQUENCE OF 1-9</scope>
    <scope>SUBUNIT</scope>
    <scope>SUBCELLULAR LOCATION</scope>
    <source>
        <strain>ATCC 27184 / PCC 6803 / Kazusa</strain>
    </source>
</reference>
<reference key="3">
    <citation type="journal article" date="2008" name="Biochemistry">
        <title>Effects of inactivating psbM and psbT on photodamage and assembly of photosystem II in Synechocystis sp. PCC 6803.</title>
        <authorList>
            <person name="Bentley F.K."/>
            <person name="Luo H."/>
            <person name="Dilbeck P."/>
            <person name="Burnap R.L."/>
            <person name="Eaton-Rye J.J."/>
        </authorList>
    </citation>
    <scope>FUNCTION</scope>
    <scope>DISRUPTION PHENOTYPE</scope>
    <source>
        <strain>ATCC 27184 / PCC 6803 / Kazusa</strain>
    </source>
</reference>
<reference evidence="6 7" key="4">
    <citation type="journal article" date="2022" name="Proc. Natl. Acad. Sci. U.S.A.">
        <title>High-resolution cryo-electron microscopy structure of photosystem II from the mesophilic cyanobacterium, Synechocystis sp. PCC 6803.</title>
        <authorList>
            <person name="Gisriel C.J."/>
            <person name="Wang J."/>
            <person name="Liu J."/>
            <person name="Flesher D.A."/>
            <person name="Reiss K.M."/>
            <person name="Huang H.L."/>
            <person name="Yang K.R."/>
            <person name="Armstrong W.H."/>
            <person name="Gunner M.R."/>
            <person name="Batista V.S."/>
            <person name="Debus R.J."/>
            <person name="Brudvig G.W."/>
        </authorList>
    </citation>
    <scope>STRUCTURE BY ELECTRON MICROSCOPY (1.93 ANGSTROMS) OF 1-31</scope>
    <scope>FUNCTION</scope>
    <scope>SUBUNIT</scope>
    <scope>SUBCELLULAR LOCATION</scope>
    <scope>FORMYLATION AT MET-1</scope>
    <source>
        <strain>ATCC 27184 / PCC 6803 / Kazusa</strain>
    </source>
</reference>